<comment type="catalytic activity">
    <reaction>
        <text>tRNA(Phe) + L-phenylalanine + ATP = L-phenylalanyl-tRNA(Phe) + AMP + diphosphate + H(+)</text>
        <dbReference type="Rhea" id="RHEA:19413"/>
        <dbReference type="Rhea" id="RHEA-COMP:9668"/>
        <dbReference type="Rhea" id="RHEA-COMP:9699"/>
        <dbReference type="ChEBI" id="CHEBI:15378"/>
        <dbReference type="ChEBI" id="CHEBI:30616"/>
        <dbReference type="ChEBI" id="CHEBI:33019"/>
        <dbReference type="ChEBI" id="CHEBI:58095"/>
        <dbReference type="ChEBI" id="CHEBI:78442"/>
        <dbReference type="ChEBI" id="CHEBI:78531"/>
        <dbReference type="ChEBI" id="CHEBI:456215"/>
        <dbReference type="EC" id="6.1.1.20"/>
    </reaction>
</comment>
<comment type="cofactor">
    <cofactor evidence="1">
        <name>Mg(2+)</name>
        <dbReference type="ChEBI" id="CHEBI:18420"/>
    </cofactor>
    <text evidence="1">Binds 2 magnesium ions per tetramer.</text>
</comment>
<comment type="subunit">
    <text evidence="1">Tetramer of two alpha and two beta subunits.</text>
</comment>
<comment type="subcellular location">
    <subcellularLocation>
        <location evidence="1">Cytoplasm</location>
    </subcellularLocation>
</comment>
<comment type="similarity">
    <text evidence="2">Belongs to the phenylalanyl-tRNA synthetase beta subunit family. Type 1 subfamily.</text>
</comment>
<dbReference type="EC" id="6.1.1.20"/>
<dbReference type="EMBL" id="AE004439">
    <property type="protein sequence ID" value="AAK02713.1"/>
    <property type="molecule type" value="Genomic_DNA"/>
</dbReference>
<dbReference type="RefSeq" id="WP_010906762.1">
    <property type="nucleotide sequence ID" value="NC_002663.1"/>
</dbReference>
<dbReference type="SMR" id="P57859"/>
<dbReference type="STRING" id="272843.PM0629"/>
<dbReference type="EnsemblBacteria" id="AAK02713">
    <property type="protein sequence ID" value="AAK02713"/>
    <property type="gene ID" value="PM0629"/>
</dbReference>
<dbReference type="KEGG" id="pmu:PM0629"/>
<dbReference type="PATRIC" id="fig|272843.6.peg.637"/>
<dbReference type="HOGENOM" id="CLU_016891_0_0_6"/>
<dbReference type="OrthoDB" id="9805455at2"/>
<dbReference type="Proteomes" id="UP000000809">
    <property type="component" value="Chromosome"/>
</dbReference>
<dbReference type="GO" id="GO:0009328">
    <property type="term" value="C:phenylalanine-tRNA ligase complex"/>
    <property type="evidence" value="ECO:0007669"/>
    <property type="project" value="TreeGrafter"/>
</dbReference>
<dbReference type="GO" id="GO:0005524">
    <property type="term" value="F:ATP binding"/>
    <property type="evidence" value="ECO:0007669"/>
    <property type="project" value="UniProtKB-UniRule"/>
</dbReference>
<dbReference type="GO" id="GO:0000287">
    <property type="term" value="F:magnesium ion binding"/>
    <property type="evidence" value="ECO:0007669"/>
    <property type="project" value="UniProtKB-UniRule"/>
</dbReference>
<dbReference type="GO" id="GO:0004826">
    <property type="term" value="F:phenylalanine-tRNA ligase activity"/>
    <property type="evidence" value="ECO:0007669"/>
    <property type="project" value="UniProtKB-UniRule"/>
</dbReference>
<dbReference type="GO" id="GO:0000049">
    <property type="term" value="F:tRNA binding"/>
    <property type="evidence" value="ECO:0007669"/>
    <property type="project" value="UniProtKB-KW"/>
</dbReference>
<dbReference type="GO" id="GO:0006432">
    <property type="term" value="P:phenylalanyl-tRNA aminoacylation"/>
    <property type="evidence" value="ECO:0007669"/>
    <property type="project" value="UniProtKB-UniRule"/>
</dbReference>
<dbReference type="CDD" id="cd00769">
    <property type="entry name" value="PheRS_beta_core"/>
    <property type="match status" value="1"/>
</dbReference>
<dbReference type="CDD" id="cd02796">
    <property type="entry name" value="tRNA_bind_bactPheRS"/>
    <property type="match status" value="1"/>
</dbReference>
<dbReference type="FunFam" id="2.40.50.140:FF:000045">
    <property type="entry name" value="Phenylalanine--tRNA ligase beta subunit"/>
    <property type="match status" value="1"/>
</dbReference>
<dbReference type="FunFam" id="3.30.56.10:FF:000002">
    <property type="entry name" value="Phenylalanine--tRNA ligase beta subunit"/>
    <property type="match status" value="1"/>
</dbReference>
<dbReference type="FunFam" id="3.30.70.380:FF:000001">
    <property type="entry name" value="Phenylalanine--tRNA ligase beta subunit"/>
    <property type="match status" value="1"/>
</dbReference>
<dbReference type="FunFam" id="3.30.930.10:FF:000022">
    <property type="entry name" value="Phenylalanine--tRNA ligase beta subunit"/>
    <property type="match status" value="1"/>
</dbReference>
<dbReference type="FunFam" id="3.50.40.10:FF:000001">
    <property type="entry name" value="Phenylalanine--tRNA ligase beta subunit"/>
    <property type="match status" value="1"/>
</dbReference>
<dbReference type="Gene3D" id="3.30.56.10">
    <property type="match status" value="2"/>
</dbReference>
<dbReference type="Gene3D" id="3.30.930.10">
    <property type="entry name" value="Bira Bifunctional Protein, Domain 2"/>
    <property type="match status" value="1"/>
</dbReference>
<dbReference type="Gene3D" id="3.30.70.380">
    <property type="entry name" value="Ferrodoxin-fold anticodon-binding domain"/>
    <property type="match status" value="1"/>
</dbReference>
<dbReference type="Gene3D" id="2.40.50.140">
    <property type="entry name" value="Nucleic acid-binding proteins"/>
    <property type="match status" value="1"/>
</dbReference>
<dbReference type="Gene3D" id="3.50.40.10">
    <property type="entry name" value="Phenylalanyl-trna Synthetase, Chain B, domain 3"/>
    <property type="match status" value="1"/>
</dbReference>
<dbReference type="HAMAP" id="MF_00283">
    <property type="entry name" value="Phe_tRNA_synth_beta1"/>
    <property type="match status" value="1"/>
</dbReference>
<dbReference type="InterPro" id="IPR045864">
    <property type="entry name" value="aa-tRNA-synth_II/BPL/LPL"/>
</dbReference>
<dbReference type="InterPro" id="IPR005146">
    <property type="entry name" value="B3/B4_tRNA-bd"/>
</dbReference>
<dbReference type="InterPro" id="IPR009061">
    <property type="entry name" value="DNA-bd_dom_put_sf"/>
</dbReference>
<dbReference type="InterPro" id="IPR005121">
    <property type="entry name" value="Fdx_antiC-bd"/>
</dbReference>
<dbReference type="InterPro" id="IPR036690">
    <property type="entry name" value="Fdx_antiC-bd_sf"/>
</dbReference>
<dbReference type="InterPro" id="IPR012340">
    <property type="entry name" value="NA-bd_OB-fold"/>
</dbReference>
<dbReference type="InterPro" id="IPR045060">
    <property type="entry name" value="Phe-tRNA-ligase_IIc_bsu"/>
</dbReference>
<dbReference type="InterPro" id="IPR004532">
    <property type="entry name" value="Phe-tRNA-ligase_IIc_bsu_bact"/>
</dbReference>
<dbReference type="InterPro" id="IPR020825">
    <property type="entry name" value="Phe-tRNA_synthase-like_B3/B4"/>
</dbReference>
<dbReference type="InterPro" id="IPR041616">
    <property type="entry name" value="PheRS_beta_core"/>
</dbReference>
<dbReference type="InterPro" id="IPR002547">
    <property type="entry name" value="tRNA-bd_dom"/>
</dbReference>
<dbReference type="InterPro" id="IPR033714">
    <property type="entry name" value="tRNA_bind_bactPheRS"/>
</dbReference>
<dbReference type="InterPro" id="IPR005147">
    <property type="entry name" value="tRNA_synthase_B5-dom"/>
</dbReference>
<dbReference type="NCBIfam" id="TIGR00472">
    <property type="entry name" value="pheT_bact"/>
    <property type="match status" value="1"/>
</dbReference>
<dbReference type="NCBIfam" id="NF045760">
    <property type="entry name" value="YtpR"/>
    <property type="match status" value="1"/>
</dbReference>
<dbReference type="PANTHER" id="PTHR10947:SF0">
    <property type="entry name" value="PHENYLALANINE--TRNA LIGASE BETA SUBUNIT"/>
    <property type="match status" value="1"/>
</dbReference>
<dbReference type="PANTHER" id="PTHR10947">
    <property type="entry name" value="PHENYLALANYL-TRNA SYNTHETASE BETA CHAIN AND LEUCINE-RICH REPEAT-CONTAINING PROTEIN 47"/>
    <property type="match status" value="1"/>
</dbReference>
<dbReference type="Pfam" id="PF03483">
    <property type="entry name" value="B3_4"/>
    <property type="match status" value="1"/>
</dbReference>
<dbReference type="Pfam" id="PF03484">
    <property type="entry name" value="B5"/>
    <property type="match status" value="1"/>
</dbReference>
<dbReference type="Pfam" id="PF03147">
    <property type="entry name" value="FDX-ACB"/>
    <property type="match status" value="1"/>
</dbReference>
<dbReference type="Pfam" id="PF01588">
    <property type="entry name" value="tRNA_bind"/>
    <property type="match status" value="1"/>
</dbReference>
<dbReference type="Pfam" id="PF17759">
    <property type="entry name" value="tRNA_synthFbeta"/>
    <property type="match status" value="1"/>
</dbReference>
<dbReference type="SMART" id="SM00873">
    <property type="entry name" value="B3_4"/>
    <property type="match status" value="1"/>
</dbReference>
<dbReference type="SMART" id="SM00874">
    <property type="entry name" value="B5"/>
    <property type="match status" value="1"/>
</dbReference>
<dbReference type="SMART" id="SM00896">
    <property type="entry name" value="FDX-ACB"/>
    <property type="match status" value="1"/>
</dbReference>
<dbReference type="SUPFAM" id="SSF54991">
    <property type="entry name" value="Anticodon-binding domain of PheRS"/>
    <property type="match status" value="1"/>
</dbReference>
<dbReference type="SUPFAM" id="SSF55681">
    <property type="entry name" value="Class II aaRS and biotin synthetases"/>
    <property type="match status" value="1"/>
</dbReference>
<dbReference type="SUPFAM" id="SSF50249">
    <property type="entry name" value="Nucleic acid-binding proteins"/>
    <property type="match status" value="1"/>
</dbReference>
<dbReference type="SUPFAM" id="SSF56037">
    <property type="entry name" value="PheT/TilS domain"/>
    <property type="match status" value="1"/>
</dbReference>
<dbReference type="SUPFAM" id="SSF46955">
    <property type="entry name" value="Putative DNA-binding domain"/>
    <property type="match status" value="1"/>
</dbReference>
<dbReference type="PROSITE" id="PS51483">
    <property type="entry name" value="B5"/>
    <property type="match status" value="1"/>
</dbReference>
<dbReference type="PROSITE" id="PS51447">
    <property type="entry name" value="FDX_ACB"/>
    <property type="match status" value="1"/>
</dbReference>
<dbReference type="PROSITE" id="PS50886">
    <property type="entry name" value="TRBD"/>
    <property type="match status" value="1"/>
</dbReference>
<gene>
    <name type="primary">pheT</name>
    <name type="ordered locus">PM0629</name>
</gene>
<accession>P57859</accession>
<evidence type="ECO:0000250" key="1"/>
<evidence type="ECO:0000305" key="2"/>
<proteinExistence type="inferred from homology"/>
<reference key="1">
    <citation type="journal article" date="2001" name="Proc. Natl. Acad. Sci. U.S.A.">
        <title>Complete genomic sequence of Pasteurella multocida Pm70.</title>
        <authorList>
            <person name="May B.J."/>
            <person name="Zhang Q."/>
            <person name="Li L.L."/>
            <person name="Paustian M.L."/>
            <person name="Whittam T.S."/>
            <person name="Kapur V."/>
        </authorList>
    </citation>
    <scope>NUCLEOTIDE SEQUENCE [LARGE SCALE GENOMIC DNA]</scope>
    <source>
        <strain>Pm70</strain>
    </source>
</reference>
<name>SYFB_PASMU</name>
<organism>
    <name type="scientific">Pasteurella multocida (strain Pm70)</name>
    <dbReference type="NCBI Taxonomy" id="272843"/>
    <lineage>
        <taxon>Bacteria</taxon>
        <taxon>Pseudomonadati</taxon>
        <taxon>Pseudomonadota</taxon>
        <taxon>Gammaproteobacteria</taxon>
        <taxon>Pasteurellales</taxon>
        <taxon>Pasteurellaceae</taxon>
        <taxon>Pasteurella</taxon>
    </lineage>
</organism>
<feature type="chain" id="PRO_0000126924" description="Phenylalanine--tRNA ligase beta subunit">
    <location>
        <begin position="1"/>
        <end position="795"/>
    </location>
</feature>
<feature type="domain" description="tRNA-binding">
    <location>
        <begin position="39"/>
        <end position="148"/>
    </location>
</feature>
<feature type="domain" description="B5">
    <location>
        <begin position="401"/>
        <end position="476"/>
    </location>
</feature>
<feature type="domain" description="FDX-ACB">
    <location>
        <begin position="701"/>
        <end position="794"/>
    </location>
</feature>
<feature type="binding site" evidence="1">
    <location>
        <position position="454"/>
    </location>
    <ligand>
        <name>Mg(2+)</name>
        <dbReference type="ChEBI" id="CHEBI:18420"/>
        <note>shared with alpha subunit</note>
    </ligand>
</feature>
<feature type="binding site" evidence="1">
    <location>
        <position position="460"/>
    </location>
    <ligand>
        <name>Mg(2+)</name>
        <dbReference type="ChEBI" id="CHEBI:18420"/>
        <note>shared with alpha subunit</note>
    </ligand>
</feature>
<feature type="binding site" evidence="1">
    <location>
        <position position="463"/>
    </location>
    <ligand>
        <name>Mg(2+)</name>
        <dbReference type="ChEBI" id="CHEBI:18420"/>
        <note>shared with alpha subunit</note>
    </ligand>
</feature>
<feature type="binding site" evidence="1">
    <location>
        <position position="464"/>
    </location>
    <ligand>
        <name>Mg(2+)</name>
        <dbReference type="ChEBI" id="CHEBI:18420"/>
        <note>shared with alpha subunit</note>
    </ligand>
</feature>
<protein>
    <recommendedName>
        <fullName>Phenylalanine--tRNA ligase beta subunit</fullName>
        <ecNumber>6.1.1.20</ecNumber>
    </recommendedName>
    <alternativeName>
        <fullName>Phenylalanyl-tRNA synthetase beta subunit</fullName>
        <shortName>PheRS</shortName>
    </alternativeName>
</protein>
<sequence>MKFSESWVREWVNPAISTAQLCDQITMLGLEVDGVEKVAGDFSGVVVGEVVECAQHPDADKLRVTKVNVGGDRLLDIVCGAPNCRQGLKVACATEGAVLPGDFKIKKTKLRGQPSEGMLCSFSELGIDVESSGIIELPQNAPVGTNLRDYLTLDDNTVEISLTPNRADCLSIAGIAREIGVVNKLAVNTPHFESVKATITDKVDIQLHAPEACPRYLLRVVKNVNVQAPSPMWLQEKLRRCGIRSIDPVVDVTNYILLELGQPMHAFDAAKVAQPVQVRMAKSGEALVLLDGSTAKLKDNTLLIADQNGPLAMAGIFGGQASGVNAETKDIILEAAFFAPLAIAGRARQYGLHTDSSHRFERGVDFELQRQAMERATALLVEICGGEVGDICEVASDAFLPKLNQVSLRREKLDALLGHHIETETVTDILTRLGLQVSYANDVWQVTSASWRFDIEIEEDLVEEIARIYGYNSIPNKAPLAHLRMREHKEADLDLARIKTALVDADYQEAITYSFVDPKIQSVLHPQQDALVLPNPISVEMSAMRLSLLSGLLGAVQYNQNRQQTRVRLFETGLRFIPDTQAEFGVRQEFVLAAVMTGNKKAEHWAGKAESVDFFDLKGDLESILSLTGTRNLVKFVAKSYPALHPGQSAAIMLNGEEIGFIGTLHPNAAKQLGLNGKTVVFEILWQAIATRQVVQAKEISRFPANRRDLAIVVAESVAASDVLDACREVAGETLTQVNLFDVYQGNGVAEGHKSLAISLIIQDNEKTLEEDDINAVVSVVLSELKQRFNAYLRD</sequence>
<keyword id="KW-0030">Aminoacyl-tRNA synthetase</keyword>
<keyword id="KW-0067">ATP-binding</keyword>
<keyword id="KW-0963">Cytoplasm</keyword>
<keyword id="KW-0436">Ligase</keyword>
<keyword id="KW-0460">Magnesium</keyword>
<keyword id="KW-0479">Metal-binding</keyword>
<keyword id="KW-0547">Nucleotide-binding</keyword>
<keyword id="KW-0648">Protein biosynthesis</keyword>
<keyword id="KW-1185">Reference proteome</keyword>
<keyword id="KW-0694">RNA-binding</keyword>
<keyword id="KW-0820">tRNA-binding</keyword>